<protein>
    <recommendedName>
        <fullName>Osmotin-like protein</fullName>
    </recommendedName>
</protein>
<keyword id="KW-0134">Cell wall</keyword>
<keyword id="KW-0903">Direct protein sequencing</keyword>
<keyword id="KW-1185">Reference proteome</keyword>
<keyword id="KW-0964">Secreted</keyword>
<keyword id="KW-0732">Signal</keyword>
<reference key="1">
    <citation type="journal article" date="1996" name="Gene">
        <title>A flower-specific gene encoding an osmotin-like protein from Lycopersicon esculentum.</title>
        <authorList>
            <person name="Chen R."/>
            <person name="Wang F."/>
            <person name="Smith A.G."/>
        </authorList>
    </citation>
    <scope>NUCLEOTIDE SEQUENCE [MRNA]</scope>
    <source>
        <strain>cv. VF36</strain>
    </source>
</reference>
<reference key="2">
    <citation type="journal article" date="1997" name="J. Biol. Chem.">
        <title>Differential extraction and protein sequencing reveals major differences in patterns of primary cell wall proteins from plants.</title>
        <authorList>
            <person name="Robertson D."/>
            <person name="Mitchell G.P."/>
            <person name="Gilroy J.S."/>
            <person name="Gerrish C."/>
            <person name="Bolwell G.P."/>
            <person name="Slabas A.R."/>
        </authorList>
    </citation>
    <scope>PROTEIN SEQUENCE OF 25-33</scope>
</reference>
<dbReference type="EMBL" id="L76632">
    <property type="protein sequence ID" value="AAB41124.1"/>
    <property type="molecule type" value="mRNA"/>
</dbReference>
<dbReference type="PIR" id="JC5237">
    <property type="entry name" value="JC5237"/>
</dbReference>
<dbReference type="RefSeq" id="NP_001234714.1">
    <property type="nucleotide sequence ID" value="NM_001247785.2"/>
</dbReference>
<dbReference type="SMR" id="Q41350"/>
<dbReference type="FunCoup" id="Q41350">
    <property type="interactions" value="15"/>
</dbReference>
<dbReference type="STRING" id="4081.Q41350"/>
<dbReference type="PaxDb" id="4081-Solyc11g066130.1.1"/>
<dbReference type="ProMEX" id="Q41350"/>
<dbReference type="EnsemblPlants" id="Solyc11g066130.1.1">
    <property type="protein sequence ID" value="Solyc11g066130.1.1.1"/>
    <property type="gene ID" value="Solyc11g066130.1"/>
</dbReference>
<dbReference type="GeneID" id="543971"/>
<dbReference type="Gramene" id="Solyc11g066130.1.1">
    <property type="protein sequence ID" value="Solyc11g066130.1.1.1"/>
    <property type="gene ID" value="Solyc11g066130.1"/>
</dbReference>
<dbReference type="KEGG" id="sly:543971"/>
<dbReference type="eggNOG" id="KOG0800">
    <property type="taxonomic scope" value="Eukaryota"/>
</dbReference>
<dbReference type="HOGENOM" id="CLU_043181_0_1_1"/>
<dbReference type="InParanoid" id="Q41350"/>
<dbReference type="OMA" id="HECSAPR"/>
<dbReference type="OrthoDB" id="430315at2759"/>
<dbReference type="PhylomeDB" id="Q41350"/>
<dbReference type="Proteomes" id="UP000004994">
    <property type="component" value="Chromosome 11"/>
</dbReference>
<dbReference type="GO" id="GO:0005576">
    <property type="term" value="C:extracellular region"/>
    <property type="evidence" value="ECO:0007669"/>
    <property type="project" value="UniProtKB-KW"/>
</dbReference>
<dbReference type="GO" id="GO:0006952">
    <property type="term" value="P:defense response"/>
    <property type="evidence" value="ECO:0000318"/>
    <property type="project" value="GO_Central"/>
</dbReference>
<dbReference type="CDD" id="cd09218">
    <property type="entry name" value="TLP-PA"/>
    <property type="match status" value="1"/>
</dbReference>
<dbReference type="FunFam" id="2.60.110.10:FF:000006">
    <property type="entry name" value="Osmotin-like protein"/>
    <property type="match status" value="1"/>
</dbReference>
<dbReference type="Gene3D" id="2.60.110.10">
    <property type="entry name" value="Thaumatin"/>
    <property type="match status" value="1"/>
</dbReference>
<dbReference type="InterPro" id="IPR037176">
    <property type="entry name" value="Osmotin/thaumatin-like_sf"/>
</dbReference>
<dbReference type="InterPro" id="IPR001938">
    <property type="entry name" value="Thaumatin"/>
</dbReference>
<dbReference type="InterPro" id="IPR017949">
    <property type="entry name" value="Thaumatin_CS"/>
</dbReference>
<dbReference type="PANTHER" id="PTHR31048">
    <property type="entry name" value="OS03G0233200 PROTEIN"/>
    <property type="match status" value="1"/>
</dbReference>
<dbReference type="Pfam" id="PF00314">
    <property type="entry name" value="Thaumatin"/>
    <property type="match status" value="1"/>
</dbReference>
<dbReference type="PIRSF" id="PIRSF002703">
    <property type="entry name" value="Thaumatin"/>
    <property type="match status" value="1"/>
</dbReference>
<dbReference type="PRINTS" id="PR00347">
    <property type="entry name" value="THAUMATIN"/>
</dbReference>
<dbReference type="SMART" id="SM00205">
    <property type="entry name" value="THN"/>
    <property type="match status" value="1"/>
</dbReference>
<dbReference type="SUPFAM" id="SSF49870">
    <property type="entry name" value="Osmotin, thaumatin-like protein"/>
    <property type="match status" value="1"/>
</dbReference>
<dbReference type="PROSITE" id="PS00316">
    <property type="entry name" value="THAUMATIN_1"/>
    <property type="match status" value="1"/>
</dbReference>
<dbReference type="PROSITE" id="PS51367">
    <property type="entry name" value="THAUMATIN_2"/>
    <property type="match status" value="1"/>
</dbReference>
<feature type="signal peptide" evidence="1">
    <location>
        <begin position="1"/>
        <end position="24"/>
    </location>
</feature>
<feature type="chain" id="PRO_0000034046" description="Osmotin-like protein">
    <location>
        <begin position="25"/>
        <end position="252"/>
    </location>
</feature>
<accession>Q41350</accession>
<organism>
    <name type="scientific">Solanum lycopersicum</name>
    <name type="common">Tomato</name>
    <name type="synonym">Lycopersicon esculentum</name>
    <dbReference type="NCBI Taxonomy" id="4081"/>
    <lineage>
        <taxon>Eukaryota</taxon>
        <taxon>Viridiplantae</taxon>
        <taxon>Streptophyta</taxon>
        <taxon>Embryophyta</taxon>
        <taxon>Tracheophyta</taxon>
        <taxon>Spermatophyta</taxon>
        <taxon>Magnoliopsida</taxon>
        <taxon>eudicotyledons</taxon>
        <taxon>Gunneridae</taxon>
        <taxon>Pentapetalae</taxon>
        <taxon>asterids</taxon>
        <taxon>lamiids</taxon>
        <taxon>Solanales</taxon>
        <taxon>Solanaceae</taxon>
        <taxon>Solanoideae</taxon>
        <taxon>Solaneae</taxon>
        <taxon>Solanum</taxon>
        <taxon>Solanum subgen. Lycopersicon</taxon>
    </lineage>
</organism>
<proteinExistence type="evidence at protein level"/>
<comment type="subcellular location">
    <subcellularLocation>
        <location evidence="2">Secreted</location>
        <location evidence="2">Cell wall</location>
    </subcellularLocation>
</comment>
<evidence type="ECO:0000269" key="1">
    <source>
    </source>
</evidence>
<evidence type="ECO:0000305" key="2"/>
<name>OLP1_SOLLC</name>
<sequence length="252" mass="27265">MASSSAKILLPLSLLFTLLSLSQSTNPNFILTLVNNCPYTIWPAIQPNAGHPVLERGGFTLHSLTHRSFPAPNAHWSGRIWARTGCNYQHGKFYCATGDCGGRIECDGLGGAAPATLAQFVLHHGHADFSTYGVSLVDGFNIPLTVTPHEGKGVCPVVGCRANLLESCPAVLQFRSHGGHGPVVGCKSACEAFKSDEFCCRNHYNSPQTCKPSSYSQFFKHACPATFTYAHDSPSLMHECSSPRELKVIFCH</sequence>